<accession>Q5M870</accession>
<feature type="chain" id="PRO_0000325773" description="E3 ubiquitin-protein ligase NEURL3">
    <location>
        <begin position="1"/>
        <end position="254"/>
    </location>
</feature>
<feature type="domain" description="NHR" evidence="3">
    <location>
        <begin position="17"/>
        <end position="174"/>
    </location>
</feature>
<feature type="zinc finger region" description="RING-type" evidence="2">
    <location>
        <begin position="197"/>
        <end position="236"/>
    </location>
</feature>
<keyword id="KW-0963">Cytoplasm</keyword>
<keyword id="KW-0391">Immunity</keyword>
<keyword id="KW-0399">Innate immunity</keyword>
<keyword id="KW-0479">Metal-binding</keyword>
<keyword id="KW-1185">Reference proteome</keyword>
<keyword id="KW-0808">Transferase</keyword>
<keyword id="KW-0833">Ubl conjugation pathway</keyword>
<keyword id="KW-0862">Zinc</keyword>
<keyword id="KW-0863">Zinc-finger</keyword>
<evidence type="ECO:0000250" key="1">
    <source>
        <dbReference type="UniProtKB" id="Q96EH8"/>
    </source>
</evidence>
<evidence type="ECO:0000255" key="2">
    <source>
        <dbReference type="PROSITE-ProRule" id="PRU00175"/>
    </source>
</evidence>
<evidence type="ECO:0000255" key="3">
    <source>
        <dbReference type="PROSITE-ProRule" id="PRU00400"/>
    </source>
</evidence>
<evidence type="ECO:0000305" key="4"/>
<name>NEUL3_RAT</name>
<reference key="1">
    <citation type="journal article" date="2004" name="Genome Res.">
        <title>The status, quality, and expansion of the NIH full-length cDNA project: the Mammalian Gene Collection (MGC).</title>
        <authorList>
            <consortium name="The MGC Project Team"/>
        </authorList>
    </citation>
    <scope>NUCLEOTIDE SEQUENCE [LARGE SCALE MRNA]</scope>
    <source>
        <tissue>Spleen</tissue>
    </source>
</reference>
<sequence>MGSRLSPEANAEVPREALSFHGDATGAQVHLDDQRSTARRRSTFHDGIVFSQRPVWPGERVALRVLRHEDGWCGGLRVGFTRLDPAQVAASCLPPFVCPDLEEQSPTWAALLPEGFVRAGNVVCFWVNRRGWLFAKVNAGRPLLLRKDVLVQGAPLWAVMDVYGTTKAIELLDPKANAWITSGEPMPESEVTSGEECVICFHNTANTRLMPCGHSQFCGSCAWHIFKDTARCPMCRWQIEEVAVEPSVKSGEGS</sequence>
<protein>
    <recommendedName>
        <fullName>E3 ubiquitin-protein ligase NEURL3</fullName>
        <ecNumber>2.3.2.27</ecNumber>
    </recommendedName>
    <alternativeName>
        <fullName>Lung-inducible neuralized-related C3CH4 RING domain protein</fullName>
    </alternativeName>
    <alternativeName>
        <fullName>Neuralized-like protein 3</fullName>
    </alternativeName>
    <alternativeName>
        <fullName evidence="4">RING-type E3 ubiquitin transferase NEURL3</fullName>
    </alternativeName>
</protein>
<dbReference type="EC" id="2.3.2.27"/>
<dbReference type="EMBL" id="BC088198">
    <property type="protein sequence ID" value="AAH88198.1"/>
    <property type="molecule type" value="mRNA"/>
</dbReference>
<dbReference type="RefSeq" id="NP_001014122.1">
    <property type="nucleotide sequence ID" value="NM_001014100.1"/>
</dbReference>
<dbReference type="RefSeq" id="XP_008765247.1">
    <property type="nucleotide sequence ID" value="XM_008767025.2"/>
</dbReference>
<dbReference type="RefSeq" id="XP_008765248.1">
    <property type="nucleotide sequence ID" value="XM_008767026.1"/>
</dbReference>
<dbReference type="SMR" id="Q5M870"/>
<dbReference type="FunCoup" id="Q5M870">
    <property type="interactions" value="151"/>
</dbReference>
<dbReference type="STRING" id="10116.ENSRNOP00000029092"/>
<dbReference type="PhosphoSitePlus" id="Q5M870"/>
<dbReference type="PaxDb" id="10116-ENSRNOP00000029092"/>
<dbReference type="Ensembl" id="ENSRNOT00000038610.6">
    <property type="protein sequence ID" value="ENSRNOP00000029092.3"/>
    <property type="gene ID" value="ENSRNOG00000015366.8"/>
</dbReference>
<dbReference type="GeneID" id="316326"/>
<dbReference type="KEGG" id="rno:316326"/>
<dbReference type="UCSC" id="RGD:1359633">
    <property type="organism name" value="rat"/>
</dbReference>
<dbReference type="AGR" id="RGD:1359633"/>
<dbReference type="CTD" id="93082"/>
<dbReference type="RGD" id="1359633">
    <property type="gene designation" value="Neurl3"/>
</dbReference>
<dbReference type="eggNOG" id="KOG4625">
    <property type="taxonomic scope" value="Eukaryota"/>
</dbReference>
<dbReference type="GeneTree" id="ENSGT00940000162540"/>
<dbReference type="HOGENOM" id="CLU_090535_0_0_1"/>
<dbReference type="InParanoid" id="Q5M870"/>
<dbReference type="OMA" id="HTHFCSS"/>
<dbReference type="OrthoDB" id="6078042at2759"/>
<dbReference type="PhylomeDB" id="Q5M870"/>
<dbReference type="TreeFam" id="TF314368"/>
<dbReference type="UniPathway" id="UPA00143"/>
<dbReference type="PRO" id="PR:Q5M870"/>
<dbReference type="Proteomes" id="UP000002494">
    <property type="component" value="Chromosome 9"/>
</dbReference>
<dbReference type="Bgee" id="ENSRNOG00000015366">
    <property type="expression patterns" value="Expressed in ileum and 16 other cell types or tissues"/>
</dbReference>
<dbReference type="GO" id="GO:0005737">
    <property type="term" value="C:cytoplasm"/>
    <property type="evidence" value="ECO:0000266"/>
    <property type="project" value="RGD"/>
</dbReference>
<dbReference type="GO" id="GO:0005769">
    <property type="term" value="C:early endosome"/>
    <property type="evidence" value="ECO:0000318"/>
    <property type="project" value="GO_Central"/>
</dbReference>
<dbReference type="GO" id="GO:0061630">
    <property type="term" value="F:ubiquitin protein ligase activity"/>
    <property type="evidence" value="ECO:0000266"/>
    <property type="project" value="RGD"/>
</dbReference>
<dbReference type="GO" id="GO:0008270">
    <property type="term" value="F:zinc ion binding"/>
    <property type="evidence" value="ECO:0007669"/>
    <property type="project" value="UniProtKB-KW"/>
</dbReference>
<dbReference type="GO" id="GO:0045087">
    <property type="term" value="P:innate immune response"/>
    <property type="evidence" value="ECO:0007669"/>
    <property type="project" value="UniProtKB-KW"/>
</dbReference>
<dbReference type="GO" id="GO:1901800">
    <property type="term" value="P:positive regulation of proteasomal protein catabolic process"/>
    <property type="evidence" value="ECO:0000266"/>
    <property type="project" value="RGD"/>
</dbReference>
<dbReference type="GO" id="GO:0016567">
    <property type="term" value="P:protein ubiquitination"/>
    <property type="evidence" value="ECO:0000266"/>
    <property type="project" value="RGD"/>
</dbReference>
<dbReference type="GO" id="GO:0070086">
    <property type="term" value="P:ubiquitin-dependent endocytosis"/>
    <property type="evidence" value="ECO:0000318"/>
    <property type="project" value="GO_Central"/>
</dbReference>
<dbReference type="CDD" id="cd16552">
    <property type="entry name" value="RING-HC_NEURL3"/>
    <property type="match status" value="1"/>
</dbReference>
<dbReference type="FunFam" id="2.60.120.920:FF:000050">
    <property type="entry name" value="Neuralized E3 ubiquitin protein ligase 3"/>
    <property type="match status" value="1"/>
</dbReference>
<dbReference type="Gene3D" id="2.60.120.920">
    <property type="match status" value="1"/>
</dbReference>
<dbReference type="Gene3D" id="3.30.40.10">
    <property type="entry name" value="Zinc/RING finger domain, C3HC4 (zinc finger)"/>
    <property type="match status" value="1"/>
</dbReference>
<dbReference type="InterPro" id="IPR043136">
    <property type="entry name" value="B30.2/SPRY_sf"/>
</dbReference>
<dbReference type="InterPro" id="IPR037962">
    <property type="entry name" value="Neuralized"/>
</dbReference>
<dbReference type="InterPro" id="IPR006573">
    <property type="entry name" value="NHR_dom"/>
</dbReference>
<dbReference type="InterPro" id="IPR001841">
    <property type="entry name" value="Znf_RING"/>
</dbReference>
<dbReference type="InterPro" id="IPR013083">
    <property type="entry name" value="Znf_RING/FYVE/PHD"/>
</dbReference>
<dbReference type="PANTHER" id="PTHR12429">
    <property type="entry name" value="NEURALIZED"/>
    <property type="match status" value="1"/>
</dbReference>
<dbReference type="PANTHER" id="PTHR12429:SF8">
    <property type="entry name" value="NEURALIZED-LIKE PROTEIN 2"/>
    <property type="match status" value="1"/>
</dbReference>
<dbReference type="Pfam" id="PF07177">
    <property type="entry name" value="Neuralized"/>
    <property type="match status" value="1"/>
</dbReference>
<dbReference type="Pfam" id="PF13920">
    <property type="entry name" value="zf-C3HC4_3"/>
    <property type="match status" value="1"/>
</dbReference>
<dbReference type="SMART" id="SM00588">
    <property type="entry name" value="NEUZ"/>
    <property type="match status" value="1"/>
</dbReference>
<dbReference type="SMART" id="SM00184">
    <property type="entry name" value="RING"/>
    <property type="match status" value="1"/>
</dbReference>
<dbReference type="SUPFAM" id="SSF57850">
    <property type="entry name" value="RING/U-box"/>
    <property type="match status" value="1"/>
</dbReference>
<dbReference type="PROSITE" id="PS51065">
    <property type="entry name" value="NHR"/>
    <property type="match status" value="1"/>
</dbReference>
<dbReference type="PROSITE" id="PS50089">
    <property type="entry name" value="ZF_RING_2"/>
    <property type="match status" value="1"/>
</dbReference>
<organism>
    <name type="scientific">Rattus norvegicus</name>
    <name type="common">Rat</name>
    <dbReference type="NCBI Taxonomy" id="10116"/>
    <lineage>
        <taxon>Eukaryota</taxon>
        <taxon>Metazoa</taxon>
        <taxon>Chordata</taxon>
        <taxon>Craniata</taxon>
        <taxon>Vertebrata</taxon>
        <taxon>Euteleostomi</taxon>
        <taxon>Mammalia</taxon>
        <taxon>Eutheria</taxon>
        <taxon>Euarchontoglires</taxon>
        <taxon>Glires</taxon>
        <taxon>Rodentia</taxon>
        <taxon>Myomorpha</taxon>
        <taxon>Muroidea</taxon>
        <taxon>Muridae</taxon>
        <taxon>Murinae</taxon>
        <taxon>Rattus</taxon>
    </lineage>
</organism>
<comment type="function">
    <text evidence="1">E3 ubiquitin-protein ligase that plays a role in various biological processes such as lung development or innate immunity. Seems to utilize UBE2E1. Promotes innate antiviral response by catalyzing 'Lys-63'-linked ubiquitination of IRF7. Also inhibits hepatitis C virus assembly by directly binding to viral E1 envelope glycoprotein to disrupt its interaction with E2. Plays an essential role in TLR4-mediated activation of MAPK pathways by promoting 'Lys-48'-linked polyubiquitination of the phosphatase DUSP1/MKP1.</text>
</comment>
<comment type="catalytic activity">
    <reaction>
        <text>S-ubiquitinyl-[E2 ubiquitin-conjugating enzyme]-L-cysteine + [acceptor protein]-L-lysine = [E2 ubiquitin-conjugating enzyme]-L-cysteine + N(6)-ubiquitinyl-[acceptor protein]-L-lysine.</text>
        <dbReference type="EC" id="2.3.2.27"/>
    </reaction>
</comment>
<comment type="pathway">
    <text>Protein modification; protein ubiquitination.</text>
</comment>
<comment type="subcellular location">
    <subcellularLocation>
        <location evidence="1">Cytoplasm</location>
    </subcellularLocation>
</comment>
<proteinExistence type="evidence at transcript level"/>
<gene>
    <name type="primary">Neurl3</name>
    <name type="synonym">Lincr</name>
</gene>